<name>NUOJ_BUCAI</name>
<protein>
    <recommendedName>
        <fullName>NADH-quinone oxidoreductase subunit J</fullName>
        <ecNumber>7.1.1.-</ecNumber>
    </recommendedName>
    <alternativeName>
        <fullName>NADH dehydrogenase I subunit J</fullName>
    </alternativeName>
    <alternativeName>
        <fullName>NDH-1 subunit J</fullName>
    </alternativeName>
</protein>
<reference key="1">
    <citation type="journal article" date="2000" name="Nature">
        <title>Genome sequence of the endocellular bacterial symbiont of aphids Buchnera sp. APS.</title>
        <authorList>
            <person name="Shigenobu S."/>
            <person name="Watanabe H."/>
            <person name="Hattori M."/>
            <person name="Sakaki Y."/>
            <person name="Ishikawa H."/>
        </authorList>
    </citation>
    <scope>NUCLEOTIDE SEQUENCE [LARGE SCALE GENOMIC DNA]</scope>
    <source>
        <strain>APS</strain>
    </source>
</reference>
<dbReference type="EC" id="7.1.1.-"/>
<dbReference type="EMBL" id="BA000003">
    <property type="protein sequence ID" value="BAB12880.1"/>
    <property type="molecule type" value="Genomic_DNA"/>
</dbReference>
<dbReference type="RefSeq" id="NP_239994.1">
    <property type="nucleotide sequence ID" value="NC_002528.1"/>
</dbReference>
<dbReference type="RefSeq" id="WP_009874118.1">
    <property type="nucleotide sequence ID" value="NZ_AP036055.1"/>
</dbReference>
<dbReference type="SMR" id="P57260"/>
<dbReference type="STRING" id="563178.BUAP5A_160"/>
<dbReference type="EnsemblBacteria" id="BAB12880">
    <property type="protein sequence ID" value="BAB12880"/>
    <property type="gene ID" value="BAB12880"/>
</dbReference>
<dbReference type="KEGG" id="buc:BU162"/>
<dbReference type="PATRIC" id="fig|107806.10.peg.172"/>
<dbReference type="eggNOG" id="COG0839">
    <property type="taxonomic scope" value="Bacteria"/>
</dbReference>
<dbReference type="HOGENOM" id="CLU_085957_0_1_6"/>
<dbReference type="Proteomes" id="UP000001806">
    <property type="component" value="Chromosome"/>
</dbReference>
<dbReference type="GO" id="GO:0005886">
    <property type="term" value="C:plasma membrane"/>
    <property type="evidence" value="ECO:0007669"/>
    <property type="project" value="UniProtKB-SubCell"/>
</dbReference>
<dbReference type="GO" id="GO:0008137">
    <property type="term" value="F:NADH dehydrogenase (ubiquinone) activity"/>
    <property type="evidence" value="ECO:0007669"/>
    <property type="project" value="InterPro"/>
</dbReference>
<dbReference type="GO" id="GO:0048038">
    <property type="term" value="F:quinone binding"/>
    <property type="evidence" value="ECO:0007669"/>
    <property type="project" value="UniProtKB-KW"/>
</dbReference>
<dbReference type="FunFam" id="1.20.120.1200:FF:000001">
    <property type="entry name" value="NADH-quinone oxidoreductase subunit J"/>
    <property type="match status" value="1"/>
</dbReference>
<dbReference type="Gene3D" id="1.20.120.1200">
    <property type="entry name" value="NADH-ubiquinone/plastoquinone oxidoreductase chain 6, subunit NuoJ"/>
    <property type="match status" value="1"/>
</dbReference>
<dbReference type="InterPro" id="IPR001457">
    <property type="entry name" value="NADH_UbQ/plastoQ_OxRdtase_su6"/>
</dbReference>
<dbReference type="InterPro" id="IPR042106">
    <property type="entry name" value="Nuo/plastoQ_OxRdtase_6_NuoJ"/>
</dbReference>
<dbReference type="NCBIfam" id="NF005162">
    <property type="entry name" value="PRK06638.1-1"/>
    <property type="match status" value="1"/>
</dbReference>
<dbReference type="PANTHER" id="PTHR33269">
    <property type="entry name" value="NADH-UBIQUINONE OXIDOREDUCTASE CHAIN 6"/>
    <property type="match status" value="1"/>
</dbReference>
<dbReference type="PANTHER" id="PTHR33269:SF17">
    <property type="entry name" value="NADH-UBIQUINONE OXIDOREDUCTASE CHAIN 6"/>
    <property type="match status" value="1"/>
</dbReference>
<dbReference type="Pfam" id="PF00499">
    <property type="entry name" value="Oxidored_q3"/>
    <property type="match status" value="1"/>
</dbReference>
<keyword id="KW-1003">Cell membrane</keyword>
<keyword id="KW-0472">Membrane</keyword>
<keyword id="KW-0520">NAD</keyword>
<keyword id="KW-0874">Quinone</keyword>
<keyword id="KW-1185">Reference proteome</keyword>
<keyword id="KW-1278">Translocase</keyword>
<keyword id="KW-0812">Transmembrane</keyword>
<keyword id="KW-1133">Transmembrane helix</keyword>
<evidence type="ECO:0000250" key="1"/>
<evidence type="ECO:0000255" key="2"/>
<evidence type="ECO:0000305" key="3"/>
<sequence>MEFVFYVCSFAAVVSTFFVIIQKNAVYSLVYLIISLLSIAGVFFSLGAFFAGSLEVIIYAGAIIVLFVFVIMMLNISDKYNLEEAHYLKPRFWIGPSILSLILLLSMTYAIFFLRDKKIDGFLIDSKIVGINLFGPYVFLVELSSILLLSALVVIFHIGTEKNVDKNKVL</sequence>
<comment type="function">
    <text evidence="1">NDH-1 shuttles electrons from NADH, via FMN and iron-sulfur (Fe-S) centers, to quinones in the respiratory chain. Couples the redox reaction to proton translocation (for every two electrons transferred, four hydrogen ions are translocated across the cytoplasmic membrane), and thus conserves the redox energy in a proton gradient (By similarity).</text>
</comment>
<comment type="catalytic activity">
    <reaction>
        <text>a quinone + NADH + 5 H(+)(in) = a quinol + NAD(+) + 4 H(+)(out)</text>
        <dbReference type="Rhea" id="RHEA:57888"/>
        <dbReference type="ChEBI" id="CHEBI:15378"/>
        <dbReference type="ChEBI" id="CHEBI:24646"/>
        <dbReference type="ChEBI" id="CHEBI:57540"/>
        <dbReference type="ChEBI" id="CHEBI:57945"/>
        <dbReference type="ChEBI" id="CHEBI:132124"/>
    </reaction>
</comment>
<comment type="subunit">
    <text evidence="1">Composed of 13 different subunits. Subunits NuoA, H, J, K, L, M, N constitute the membrane sector of the complex (By similarity).</text>
</comment>
<comment type="subcellular location">
    <subcellularLocation>
        <location evidence="3">Cell membrane</location>
        <topology evidence="3">Multi-pass membrane protein</topology>
    </subcellularLocation>
</comment>
<comment type="similarity">
    <text evidence="3">Belongs to the complex I subunit 6 family.</text>
</comment>
<gene>
    <name type="primary">nuoJ</name>
    <name type="ordered locus">BU162</name>
</gene>
<feature type="chain" id="PRO_0000118374" description="NADH-quinone oxidoreductase subunit J">
    <location>
        <begin position="1"/>
        <end position="170"/>
    </location>
</feature>
<feature type="transmembrane region" description="Helical" evidence="2">
    <location>
        <begin position="1"/>
        <end position="21"/>
    </location>
</feature>
<feature type="transmembrane region" description="Helical" evidence="2">
    <location>
        <begin position="30"/>
        <end position="50"/>
    </location>
</feature>
<feature type="transmembrane region" description="Helical" evidence="2">
    <location>
        <begin position="56"/>
        <end position="76"/>
    </location>
</feature>
<feature type="transmembrane region" description="Helical" evidence="2">
    <location>
        <begin position="94"/>
        <end position="114"/>
    </location>
</feature>
<feature type="transmembrane region" description="Helical" evidence="2">
    <location>
        <begin position="138"/>
        <end position="158"/>
    </location>
</feature>
<organism>
    <name type="scientific">Buchnera aphidicola subsp. Acyrthosiphon pisum (strain APS)</name>
    <name type="common">Acyrthosiphon pisum symbiotic bacterium</name>
    <dbReference type="NCBI Taxonomy" id="107806"/>
    <lineage>
        <taxon>Bacteria</taxon>
        <taxon>Pseudomonadati</taxon>
        <taxon>Pseudomonadota</taxon>
        <taxon>Gammaproteobacteria</taxon>
        <taxon>Enterobacterales</taxon>
        <taxon>Erwiniaceae</taxon>
        <taxon>Buchnera</taxon>
    </lineage>
</organism>
<proteinExistence type="inferred from homology"/>
<accession>P57260</accession>